<organism>
    <name type="scientific">Triticum aestivum</name>
    <name type="common">Wheat</name>
    <dbReference type="NCBI Taxonomy" id="4565"/>
    <lineage>
        <taxon>Eukaryota</taxon>
        <taxon>Viridiplantae</taxon>
        <taxon>Streptophyta</taxon>
        <taxon>Embryophyta</taxon>
        <taxon>Tracheophyta</taxon>
        <taxon>Spermatophyta</taxon>
        <taxon>Magnoliopsida</taxon>
        <taxon>Liliopsida</taxon>
        <taxon>Poales</taxon>
        <taxon>Poaceae</taxon>
        <taxon>BOP clade</taxon>
        <taxon>Pooideae</taxon>
        <taxon>Triticodae</taxon>
        <taxon>Triticeae</taxon>
        <taxon>Triticinae</taxon>
        <taxon>Triticum</taxon>
    </lineage>
</organism>
<accession>B0LXM0</accession>
<protein>
    <recommendedName>
        <fullName>S-adenosylmethionine synthase</fullName>
        <shortName>AdoMet synthase</shortName>
        <ecNumber evidence="5">2.5.1.6</ecNumber>
    </recommendedName>
    <alternativeName>
        <fullName>Methionine adenosyltransferase</fullName>
        <shortName>MAT</shortName>
    </alternativeName>
</protein>
<reference key="1">
    <citation type="submission" date="2008-01" db="EMBL/GenBank/DDBJ databases">
        <title>Cloning and functional analysis of S-adenosylmethionine synthetase (SAMS gene) with drought resistance in wheat.</title>
        <authorList>
            <person name="Wang S.Q."/>
            <person name="Hu Y.G."/>
            <person name="She K.J."/>
        </authorList>
    </citation>
    <scope>NUCLEOTIDE SEQUENCE [MRNA]</scope>
    <source>
        <strain>cv. Chinese Spring</strain>
    </source>
</reference>
<dbReference type="EC" id="2.5.1.6" evidence="5"/>
<dbReference type="EMBL" id="EU399630">
    <property type="protein sequence ID" value="ABY85789.1"/>
    <property type="molecule type" value="mRNA"/>
</dbReference>
<dbReference type="SMR" id="B0LXM0"/>
<dbReference type="STRING" id="4565.B0LXM0"/>
<dbReference type="PaxDb" id="4565-Traes_6AS_0C1D497EA.1"/>
<dbReference type="eggNOG" id="KOG1506">
    <property type="taxonomic scope" value="Eukaryota"/>
</dbReference>
<dbReference type="UniPathway" id="UPA00315">
    <property type="reaction ID" value="UER00080"/>
</dbReference>
<dbReference type="Proteomes" id="UP000019116">
    <property type="component" value="Unplaced"/>
</dbReference>
<dbReference type="ExpressionAtlas" id="B0LXM0">
    <property type="expression patterns" value="baseline and differential"/>
</dbReference>
<dbReference type="GO" id="GO:0005829">
    <property type="term" value="C:cytosol"/>
    <property type="evidence" value="ECO:0000318"/>
    <property type="project" value="GO_Central"/>
</dbReference>
<dbReference type="GO" id="GO:0005524">
    <property type="term" value="F:ATP binding"/>
    <property type="evidence" value="ECO:0007669"/>
    <property type="project" value="UniProtKB-KW"/>
</dbReference>
<dbReference type="GO" id="GO:0046872">
    <property type="term" value="F:metal ion binding"/>
    <property type="evidence" value="ECO:0007669"/>
    <property type="project" value="UniProtKB-KW"/>
</dbReference>
<dbReference type="GO" id="GO:0004478">
    <property type="term" value="F:methionine adenosyltransferase activity"/>
    <property type="evidence" value="ECO:0000318"/>
    <property type="project" value="GO_Central"/>
</dbReference>
<dbReference type="GO" id="GO:0006730">
    <property type="term" value="P:one-carbon metabolic process"/>
    <property type="evidence" value="ECO:0007669"/>
    <property type="project" value="UniProtKB-KW"/>
</dbReference>
<dbReference type="GO" id="GO:0006556">
    <property type="term" value="P:S-adenosylmethionine biosynthetic process"/>
    <property type="evidence" value="ECO:0000318"/>
    <property type="project" value="GO_Central"/>
</dbReference>
<dbReference type="CDD" id="cd18079">
    <property type="entry name" value="S-AdoMet_synt"/>
    <property type="match status" value="1"/>
</dbReference>
<dbReference type="FunFam" id="3.30.300.10:FF:000001">
    <property type="entry name" value="S-adenosylmethionine synthase"/>
    <property type="match status" value="1"/>
</dbReference>
<dbReference type="FunFam" id="3.30.300.10:FF:000003">
    <property type="entry name" value="S-adenosylmethionine synthase"/>
    <property type="match status" value="1"/>
</dbReference>
<dbReference type="FunFam" id="3.30.300.10:FF:000004">
    <property type="entry name" value="S-adenosylmethionine synthase"/>
    <property type="match status" value="1"/>
</dbReference>
<dbReference type="Gene3D" id="3.30.300.10">
    <property type="match status" value="3"/>
</dbReference>
<dbReference type="HAMAP" id="MF_00086">
    <property type="entry name" value="S_AdoMet_synth1"/>
    <property type="match status" value="1"/>
</dbReference>
<dbReference type="InterPro" id="IPR022631">
    <property type="entry name" value="ADOMET_SYNTHASE_CS"/>
</dbReference>
<dbReference type="InterPro" id="IPR022630">
    <property type="entry name" value="S-AdoMet_synt_C"/>
</dbReference>
<dbReference type="InterPro" id="IPR022629">
    <property type="entry name" value="S-AdoMet_synt_central"/>
</dbReference>
<dbReference type="InterPro" id="IPR022628">
    <property type="entry name" value="S-AdoMet_synt_N"/>
</dbReference>
<dbReference type="InterPro" id="IPR002133">
    <property type="entry name" value="S-AdoMet_synthetase"/>
</dbReference>
<dbReference type="InterPro" id="IPR022636">
    <property type="entry name" value="S-AdoMet_synthetase_sfam"/>
</dbReference>
<dbReference type="NCBIfam" id="TIGR01034">
    <property type="entry name" value="metK"/>
    <property type="match status" value="1"/>
</dbReference>
<dbReference type="PANTHER" id="PTHR11964">
    <property type="entry name" value="S-ADENOSYLMETHIONINE SYNTHETASE"/>
    <property type="match status" value="1"/>
</dbReference>
<dbReference type="Pfam" id="PF02773">
    <property type="entry name" value="S-AdoMet_synt_C"/>
    <property type="match status" value="1"/>
</dbReference>
<dbReference type="Pfam" id="PF02772">
    <property type="entry name" value="S-AdoMet_synt_M"/>
    <property type="match status" value="1"/>
</dbReference>
<dbReference type="Pfam" id="PF00438">
    <property type="entry name" value="S-AdoMet_synt_N"/>
    <property type="match status" value="1"/>
</dbReference>
<dbReference type="PIRSF" id="PIRSF000497">
    <property type="entry name" value="MAT"/>
    <property type="match status" value="1"/>
</dbReference>
<dbReference type="SUPFAM" id="SSF55973">
    <property type="entry name" value="S-adenosylmethionine synthetase"/>
    <property type="match status" value="3"/>
</dbReference>
<dbReference type="PROSITE" id="PS00376">
    <property type="entry name" value="ADOMET_SYNTHASE_1"/>
    <property type="match status" value="1"/>
</dbReference>
<dbReference type="PROSITE" id="PS00377">
    <property type="entry name" value="ADOMET_SYNTHASE_2"/>
    <property type="match status" value="1"/>
</dbReference>
<sequence length="396" mass="43180">MAAVDTFLFTSESVNEGHPDKLCDQISDAVLDACLAEDPDSKVACETCTKTNMVMVFGEITTKANVDYEKIVRDTCRGIGFVSNDVGLDADHCKVLVNIEQQSPDIAQGVHGHFTKRPEEIGAGDQGHMFGYATDETPEFMPLSHVLATKLGARLTEVRKNATCPWLRPDGKTQVTVEYHNDNGAMVPIRVHTVLISTQHDETVTNDEIAADLKEHVIKPVIPEQYLDENTIFHLNPSGRFVIGGPHGDAGLTGRKIIIDTYGGWGAHGGGAFSGKDPTKVDRSGAYVARQAAKSIVASGIARRCIVQVSYAIGVPEPLSVFVDTYGTGKIPDKEILEIVKENFDFRPGMIIINLDLKRGGKGRYLKTAAYGHFGREGADFTWEVVKPLKWEKPSA</sequence>
<evidence type="ECO:0000250" key="1"/>
<evidence type="ECO:0000250" key="2">
    <source>
        <dbReference type="UniProtKB" id="P0A817"/>
    </source>
</evidence>
<evidence type="ECO:0000250" key="3">
    <source>
        <dbReference type="UniProtKB" id="P13444"/>
    </source>
</evidence>
<evidence type="ECO:0000250" key="4">
    <source>
        <dbReference type="UniProtKB" id="Q00266"/>
    </source>
</evidence>
<evidence type="ECO:0000250" key="5">
    <source>
        <dbReference type="UniProtKB" id="Q96551"/>
    </source>
</evidence>
<evidence type="ECO:0000305" key="6"/>
<keyword id="KW-0067">ATP-binding</keyword>
<keyword id="KW-0170">Cobalt</keyword>
<keyword id="KW-0963">Cytoplasm</keyword>
<keyword id="KW-0460">Magnesium</keyword>
<keyword id="KW-0479">Metal-binding</keyword>
<keyword id="KW-0547">Nucleotide-binding</keyword>
<keyword id="KW-0554">One-carbon metabolism</keyword>
<keyword id="KW-0630">Potassium</keyword>
<keyword id="KW-1185">Reference proteome</keyword>
<keyword id="KW-0808">Transferase</keyword>
<feature type="chain" id="PRO_0000363059" description="S-adenosylmethionine synthase">
    <location>
        <begin position="1"/>
        <end position="396"/>
    </location>
</feature>
<feature type="binding site" evidence="3">
    <location>
        <position position="12"/>
    </location>
    <ligand>
        <name>Mg(2+)</name>
        <dbReference type="ChEBI" id="CHEBI:18420"/>
    </ligand>
</feature>
<feature type="binding site" description="in other chain" evidence="4">
    <location>
        <position position="18"/>
    </location>
    <ligand>
        <name>ATP</name>
        <dbReference type="ChEBI" id="CHEBI:30616"/>
        <note>ligand shared between two neighboring subunits</note>
    </ligand>
</feature>
<feature type="binding site" evidence="2">
    <location>
        <position position="46"/>
    </location>
    <ligand>
        <name>K(+)</name>
        <dbReference type="ChEBI" id="CHEBI:29103"/>
    </ligand>
</feature>
<feature type="binding site" description="in other chain" evidence="2">
    <location>
        <position position="59"/>
    </location>
    <ligand>
        <name>L-methionine</name>
        <dbReference type="ChEBI" id="CHEBI:57844"/>
        <note>ligand shared between two neighboring subunits</note>
    </ligand>
</feature>
<feature type="binding site" description="in other chain" evidence="2">
    <location>
        <position position="102"/>
    </location>
    <ligand>
        <name>L-methionine</name>
        <dbReference type="ChEBI" id="CHEBI:57844"/>
        <note>ligand shared between two neighboring subunits</note>
    </ligand>
</feature>
<feature type="binding site" description="in other chain" evidence="4">
    <location>
        <begin position="170"/>
        <end position="172"/>
    </location>
    <ligand>
        <name>ATP</name>
        <dbReference type="ChEBI" id="CHEBI:30616"/>
        <note>ligand shared between two neighboring subunits</note>
    </ligand>
</feature>
<feature type="binding site" description="in other chain" evidence="4">
    <location>
        <begin position="238"/>
        <end position="241"/>
    </location>
    <ligand>
        <name>ATP</name>
        <dbReference type="ChEBI" id="CHEBI:30616"/>
        <note>ligand shared between two neighboring subunits</note>
    </ligand>
</feature>
<feature type="binding site" description="in other chain" evidence="4">
    <location>
        <position position="249"/>
    </location>
    <ligand>
        <name>ATP</name>
        <dbReference type="ChEBI" id="CHEBI:30616"/>
        <note>ligand shared between two neighboring subunits</note>
    </ligand>
</feature>
<feature type="binding site" evidence="2">
    <location>
        <position position="249"/>
    </location>
    <ligand>
        <name>L-methionine</name>
        <dbReference type="ChEBI" id="CHEBI:57844"/>
        <note>ligand shared between two neighboring subunits</note>
    </ligand>
</feature>
<feature type="binding site" description="in other chain" evidence="2">
    <location>
        <begin position="255"/>
        <end position="256"/>
    </location>
    <ligand>
        <name>ATP</name>
        <dbReference type="ChEBI" id="CHEBI:30616"/>
        <note>ligand shared between two neighboring subunits</note>
    </ligand>
</feature>
<feature type="binding site" evidence="2">
    <location>
        <position position="272"/>
    </location>
    <ligand>
        <name>ATP</name>
        <dbReference type="ChEBI" id="CHEBI:30616"/>
        <note>ligand shared between two neighboring subunits</note>
    </ligand>
</feature>
<feature type="binding site" evidence="2">
    <location>
        <position position="276"/>
    </location>
    <ligand>
        <name>ATP</name>
        <dbReference type="ChEBI" id="CHEBI:30616"/>
        <note>ligand shared between two neighboring subunits</note>
    </ligand>
</feature>
<feature type="binding site" evidence="3">
    <location>
        <position position="280"/>
    </location>
    <ligand>
        <name>ATP</name>
        <dbReference type="ChEBI" id="CHEBI:30616"/>
        <note>ligand shared between two neighboring subunits</note>
    </ligand>
</feature>
<feature type="binding site" description="in other chain" evidence="2">
    <location>
        <position position="280"/>
    </location>
    <ligand>
        <name>L-methionine</name>
        <dbReference type="ChEBI" id="CHEBI:57844"/>
        <note>ligand shared between two neighboring subunits</note>
    </ligand>
</feature>
<comment type="function">
    <text evidence="5">Catalyzes the formation of S-adenosylmethionine from methionine and ATP. The reaction comprises two steps that are both catalyzed by the same enzyme: formation of S-adenosylmethionine (AdoMet) and triphosphate, and subsequent hydrolysis of the triphosphate.</text>
</comment>
<comment type="catalytic activity">
    <reaction evidence="5">
        <text>L-methionine + ATP + H2O = S-adenosyl-L-methionine + phosphate + diphosphate</text>
        <dbReference type="Rhea" id="RHEA:21080"/>
        <dbReference type="ChEBI" id="CHEBI:15377"/>
        <dbReference type="ChEBI" id="CHEBI:30616"/>
        <dbReference type="ChEBI" id="CHEBI:33019"/>
        <dbReference type="ChEBI" id="CHEBI:43474"/>
        <dbReference type="ChEBI" id="CHEBI:57844"/>
        <dbReference type="ChEBI" id="CHEBI:59789"/>
        <dbReference type="EC" id="2.5.1.6"/>
    </reaction>
</comment>
<comment type="cofactor">
    <cofactor evidence="5">
        <name>Mn(2+)</name>
        <dbReference type="ChEBI" id="CHEBI:29035"/>
    </cofactor>
    <cofactor evidence="5">
        <name>Mg(2+)</name>
        <dbReference type="ChEBI" id="CHEBI:18420"/>
    </cofactor>
    <cofactor evidence="5">
        <name>Co(2+)</name>
        <dbReference type="ChEBI" id="CHEBI:48828"/>
    </cofactor>
    <text evidence="3 5">Binds 2 divalent ions per subunit. The metal ions interact primarily with the substrate (By similarity). Can utilize magnesium, manganese or cobalt (in vitro) (By similarity).</text>
</comment>
<comment type="cofactor">
    <cofactor evidence="5">
        <name>K(+)</name>
        <dbReference type="ChEBI" id="CHEBI:29103"/>
    </cofactor>
    <text evidence="3">Binds 1 potassium ion per subunit. The potassium ion interacts primarily with the substrate (By similarity).</text>
</comment>
<comment type="pathway">
    <text>Amino-acid biosynthesis; S-adenosyl-L-methionine biosynthesis; S-adenosyl-L-methionine from L-methionine: step 1/1.</text>
</comment>
<comment type="subunit">
    <text evidence="1">Homotetramer.</text>
</comment>
<comment type="subcellular location">
    <subcellularLocation>
        <location evidence="1">Cytoplasm</location>
    </subcellularLocation>
</comment>
<comment type="similarity">
    <text evidence="6">Belongs to the AdoMet synthase family.</text>
</comment>
<name>METK_WHEAT</name>
<gene>
    <name type="primary">SAMS</name>
</gene>
<proteinExistence type="evidence at transcript level"/>